<organism>
    <name type="scientific">Bacillus subtilis (strain 168)</name>
    <dbReference type="NCBI Taxonomy" id="224308"/>
    <lineage>
        <taxon>Bacteria</taxon>
        <taxon>Bacillati</taxon>
        <taxon>Bacillota</taxon>
        <taxon>Bacilli</taxon>
        <taxon>Bacillales</taxon>
        <taxon>Bacillaceae</taxon>
        <taxon>Bacillus</taxon>
    </lineage>
</organism>
<proteinExistence type="predicted"/>
<dbReference type="EMBL" id="AL009126">
    <property type="protein sequence ID" value="CAX52654.1"/>
    <property type="molecule type" value="Genomic_DNA"/>
</dbReference>
<dbReference type="RefSeq" id="WP_003230563.1">
    <property type="nucleotide sequence ID" value="NZ_OZ025638.1"/>
</dbReference>
<dbReference type="RefSeq" id="YP_003097755.1">
    <property type="nucleotide sequence ID" value="NC_000964.3"/>
</dbReference>
<dbReference type="FunCoup" id="C0H445">
    <property type="interactions" value="30"/>
</dbReference>
<dbReference type="STRING" id="224308.BSU22849"/>
<dbReference type="PaxDb" id="224308-BSU22849"/>
<dbReference type="EnsemblBacteria" id="CAX52654">
    <property type="protein sequence ID" value="CAX52654"/>
    <property type="gene ID" value="BSU_22849"/>
</dbReference>
<dbReference type="GeneID" id="8303000"/>
<dbReference type="KEGG" id="bsu:BSU22849"/>
<dbReference type="PATRIC" id="fig|224308.179.peg.2490"/>
<dbReference type="eggNOG" id="ENOG503308G">
    <property type="taxonomic scope" value="Bacteria"/>
</dbReference>
<dbReference type="InParanoid" id="C0H445"/>
<dbReference type="OrthoDB" id="1955035at2"/>
<dbReference type="BioCyc" id="BSUB:BSU22849-MONOMER"/>
<dbReference type="Proteomes" id="UP000001570">
    <property type="component" value="Chromosome"/>
</dbReference>
<dbReference type="InterPro" id="IPR054055">
    <property type="entry name" value="YpzH"/>
</dbReference>
<dbReference type="Pfam" id="PF21835">
    <property type="entry name" value="YIEGIA_cap"/>
    <property type="match status" value="1"/>
</dbReference>
<sequence length="64" mass="7150">MSESLTKVILSVITTNRNRVAGGAPVFFCNDQKEMELFAKNLEAILDGIAHRIGDDVYLIVKHF</sequence>
<gene>
    <name type="primary">ypzH</name>
    <name type="ordered locus">BSU22849</name>
</gene>
<name>YPZH_BACSU</name>
<feature type="chain" id="PRO_0000380082" description="Uncharacterized protein YpzH">
    <location>
        <begin position="1"/>
        <end position="64"/>
    </location>
</feature>
<reference key="1">
    <citation type="journal article" date="1997" name="Nature">
        <title>The complete genome sequence of the Gram-positive bacterium Bacillus subtilis.</title>
        <authorList>
            <person name="Kunst F."/>
            <person name="Ogasawara N."/>
            <person name="Moszer I."/>
            <person name="Albertini A.M."/>
            <person name="Alloni G."/>
            <person name="Azevedo V."/>
            <person name="Bertero M.G."/>
            <person name="Bessieres P."/>
            <person name="Bolotin A."/>
            <person name="Borchert S."/>
            <person name="Borriss R."/>
            <person name="Boursier L."/>
            <person name="Brans A."/>
            <person name="Braun M."/>
            <person name="Brignell S.C."/>
            <person name="Bron S."/>
            <person name="Brouillet S."/>
            <person name="Bruschi C.V."/>
            <person name="Caldwell B."/>
            <person name="Capuano V."/>
            <person name="Carter N.M."/>
            <person name="Choi S.-K."/>
            <person name="Codani J.-J."/>
            <person name="Connerton I.F."/>
            <person name="Cummings N.J."/>
            <person name="Daniel R.A."/>
            <person name="Denizot F."/>
            <person name="Devine K.M."/>
            <person name="Duesterhoeft A."/>
            <person name="Ehrlich S.D."/>
            <person name="Emmerson P.T."/>
            <person name="Entian K.-D."/>
            <person name="Errington J."/>
            <person name="Fabret C."/>
            <person name="Ferrari E."/>
            <person name="Foulger D."/>
            <person name="Fritz C."/>
            <person name="Fujita M."/>
            <person name="Fujita Y."/>
            <person name="Fuma S."/>
            <person name="Galizzi A."/>
            <person name="Galleron N."/>
            <person name="Ghim S.-Y."/>
            <person name="Glaser P."/>
            <person name="Goffeau A."/>
            <person name="Golightly E.J."/>
            <person name="Grandi G."/>
            <person name="Guiseppi G."/>
            <person name="Guy B.J."/>
            <person name="Haga K."/>
            <person name="Haiech J."/>
            <person name="Harwood C.R."/>
            <person name="Henaut A."/>
            <person name="Hilbert H."/>
            <person name="Holsappel S."/>
            <person name="Hosono S."/>
            <person name="Hullo M.-F."/>
            <person name="Itaya M."/>
            <person name="Jones L.-M."/>
            <person name="Joris B."/>
            <person name="Karamata D."/>
            <person name="Kasahara Y."/>
            <person name="Klaerr-Blanchard M."/>
            <person name="Klein C."/>
            <person name="Kobayashi Y."/>
            <person name="Koetter P."/>
            <person name="Koningstein G."/>
            <person name="Krogh S."/>
            <person name="Kumano M."/>
            <person name="Kurita K."/>
            <person name="Lapidus A."/>
            <person name="Lardinois S."/>
            <person name="Lauber J."/>
            <person name="Lazarevic V."/>
            <person name="Lee S.-M."/>
            <person name="Levine A."/>
            <person name="Liu H."/>
            <person name="Masuda S."/>
            <person name="Mauel C."/>
            <person name="Medigue C."/>
            <person name="Medina N."/>
            <person name="Mellado R.P."/>
            <person name="Mizuno M."/>
            <person name="Moestl D."/>
            <person name="Nakai S."/>
            <person name="Noback M."/>
            <person name="Noone D."/>
            <person name="O'Reilly M."/>
            <person name="Ogawa K."/>
            <person name="Ogiwara A."/>
            <person name="Oudega B."/>
            <person name="Park S.-H."/>
            <person name="Parro V."/>
            <person name="Pohl T.M."/>
            <person name="Portetelle D."/>
            <person name="Porwollik S."/>
            <person name="Prescott A.M."/>
            <person name="Presecan E."/>
            <person name="Pujic P."/>
            <person name="Purnelle B."/>
            <person name="Rapoport G."/>
            <person name="Rey M."/>
            <person name="Reynolds S."/>
            <person name="Rieger M."/>
            <person name="Rivolta C."/>
            <person name="Rocha E."/>
            <person name="Roche B."/>
            <person name="Rose M."/>
            <person name="Sadaie Y."/>
            <person name="Sato T."/>
            <person name="Scanlan E."/>
            <person name="Schleich S."/>
            <person name="Schroeter R."/>
            <person name="Scoffone F."/>
            <person name="Sekiguchi J."/>
            <person name="Sekowska A."/>
            <person name="Seror S.J."/>
            <person name="Serror P."/>
            <person name="Shin B.-S."/>
            <person name="Soldo B."/>
            <person name="Sorokin A."/>
            <person name="Tacconi E."/>
            <person name="Takagi T."/>
            <person name="Takahashi H."/>
            <person name="Takemaru K."/>
            <person name="Takeuchi M."/>
            <person name="Tamakoshi A."/>
            <person name="Tanaka T."/>
            <person name="Terpstra P."/>
            <person name="Tognoni A."/>
            <person name="Tosato V."/>
            <person name="Uchiyama S."/>
            <person name="Vandenbol M."/>
            <person name="Vannier F."/>
            <person name="Vassarotti A."/>
            <person name="Viari A."/>
            <person name="Wambutt R."/>
            <person name="Wedler E."/>
            <person name="Wedler H."/>
            <person name="Weitzenegger T."/>
            <person name="Winters P."/>
            <person name="Wipat A."/>
            <person name="Yamamoto H."/>
            <person name="Yamane K."/>
            <person name="Yasumoto K."/>
            <person name="Yata K."/>
            <person name="Yoshida K."/>
            <person name="Yoshikawa H.-F."/>
            <person name="Zumstein E."/>
            <person name="Yoshikawa H."/>
            <person name="Danchin A."/>
        </authorList>
    </citation>
    <scope>NUCLEOTIDE SEQUENCE [LARGE SCALE GENOMIC DNA]</scope>
    <source>
        <strain>168</strain>
    </source>
</reference>
<accession>C0H445</accession>
<protein>
    <recommendedName>
        <fullName>Uncharacterized protein YpzH</fullName>
    </recommendedName>
</protein>
<keyword id="KW-1185">Reference proteome</keyword>